<comment type="function">
    <text evidence="1">Condensation of UDP-2,3-diacylglucosamine and 2,3-diacylglucosamine-1-phosphate to form lipid A disaccharide, a precursor of lipid A, a phosphorylated glycolipid that anchors the lipopolysaccharide to the outer membrane of the cell.</text>
</comment>
<comment type="catalytic activity">
    <reaction evidence="1">
        <text>a lipid X + a UDP-2-N,3-O-bis[(3R)-3-hydroxyacyl]-alpha-D-glucosamine = a lipid A disaccharide + UDP + H(+)</text>
        <dbReference type="Rhea" id="RHEA:67828"/>
        <dbReference type="ChEBI" id="CHEBI:15378"/>
        <dbReference type="ChEBI" id="CHEBI:58223"/>
        <dbReference type="ChEBI" id="CHEBI:137748"/>
        <dbReference type="ChEBI" id="CHEBI:176338"/>
        <dbReference type="ChEBI" id="CHEBI:176343"/>
        <dbReference type="EC" id="2.4.1.182"/>
    </reaction>
</comment>
<comment type="pathway">
    <text evidence="1">Bacterial outer membrane biogenesis; LPS lipid A biosynthesis.</text>
</comment>
<comment type="similarity">
    <text evidence="1">Belongs to the LpxB family.</text>
</comment>
<proteinExistence type="inferred from homology"/>
<sequence length="396" mass="44033">MTPISERPIRIGIVAGEASGDLLGAGLMQEIKALYPQATFEGIGGERMLKEGFNTFFQMERLSIMGLVEVLGRLPELLAMRRRIVDHFTATPPDLFLGIDSPDFTIGIELKLRQAGIKTAHYVSPSVWAWRQNRVFKIAKAVDLMLTLLPFEARFYREHNVPVKFVGHPLAEIIPLHPDKVAMRHELGIDASGEVIAVLPGSRGGEVSRLGPTFIETIAWLHQRRPDVRFVIPAANQARKTQIEQQLQSHGGRLPVTLIDQHSRECMMAADAILLASGTATLEAMLVKRPMVVAYKLATLSYWIMRRLLKAKYISLPNLLADKALVPELIQNDATPAKLGEALLKELNVERRRSLEDEFEGLHKLIRQNASVAAAQAVAELIEKGRVATHDAREGH</sequence>
<keyword id="KW-0328">Glycosyltransferase</keyword>
<keyword id="KW-0441">Lipid A biosynthesis</keyword>
<keyword id="KW-0444">Lipid biosynthesis</keyword>
<keyword id="KW-0443">Lipid metabolism</keyword>
<keyword id="KW-1185">Reference proteome</keyword>
<keyword id="KW-0808">Transferase</keyword>
<evidence type="ECO:0000255" key="1">
    <source>
        <dbReference type="HAMAP-Rule" id="MF_00392"/>
    </source>
</evidence>
<feature type="chain" id="PRO_0000255187" description="Lipid-A-disaccharide synthase">
    <location>
        <begin position="1"/>
        <end position="396"/>
    </location>
</feature>
<name>LPXB_HAHCH</name>
<organism>
    <name type="scientific">Hahella chejuensis (strain KCTC 2396)</name>
    <dbReference type="NCBI Taxonomy" id="349521"/>
    <lineage>
        <taxon>Bacteria</taxon>
        <taxon>Pseudomonadati</taxon>
        <taxon>Pseudomonadota</taxon>
        <taxon>Gammaproteobacteria</taxon>
        <taxon>Oceanospirillales</taxon>
        <taxon>Hahellaceae</taxon>
        <taxon>Hahella</taxon>
    </lineage>
</organism>
<reference key="1">
    <citation type="journal article" date="2005" name="Nucleic Acids Res.">
        <title>Genomic blueprint of Hahella chejuensis, a marine microbe producing an algicidal agent.</title>
        <authorList>
            <person name="Jeong H."/>
            <person name="Yim J.H."/>
            <person name="Lee C."/>
            <person name="Choi S.-H."/>
            <person name="Park Y.K."/>
            <person name="Yoon S.H."/>
            <person name="Hur C.-G."/>
            <person name="Kang H.-Y."/>
            <person name="Kim D."/>
            <person name="Lee H.H."/>
            <person name="Park K.H."/>
            <person name="Park S.-H."/>
            <person name="Park H.-S."/>
            <person name="Lee H.K."/>
            <person name="Oh T.K."/>
            <person name="Kim J.F."/>
        </authorList>
    </citation>
    <scope>NUCLEOTIDE SEQUENCE [LARGE SCALE GENOMIC DNA]</scope>
    <source>
        <strain>KCTC 2396</strain>
    </source>
</reference>
<gene>
    <name evidence="1" type="primary">lpxB</name>
    <name type="ordered locus">HCH_05238</name>
</gene>
<dbReference type="EC" id="2.4.1.182" evidence="1"/>
<dbReference type="EMBL" id="CP000155">
    <property type="protein sequence ID" value="ABC31913.1"/>
    <property type="molecule type" value="Genomic_DNA"/>
</dbReference>
<dbReference type="RefSeq" id="WP_011398977.1">
    <property type="nucleotide sequence ID" value="NC_007645.1"/>
</dbReference>
<dbReference type="SMR" id="Q2SBR1"/>
<dbReference type="STRING" id="349521.HCH_05238"/>
<dbReference type="CAZy" id="GT19">
    <property type="family name" value="Glycosyltransferase Family 19"/>
</dbReference>
<dbReference type="KEGG" id="hch:HCH_05238"/>
<dbReference type="eggNOG" id="COG0763">
    <property type="taxonomic scope" value="Bacteria"/>
</dbReference>
<dbReference type="HOGENOM" id="CLU_036577_3_0_6"/>
<dbReference type="OrthoDB" id="9801642at2"/>
<dbReference type="UniPathway" id="UPA00973"/>
<dbReference type="Proteomes" id="UP000000238">
    <property type="component" value="Chromosome"/>
</dbReference>
<dbReference type="GO" id="GO:0016020">
    <property type="term" value="C:membrane"/>
    <property type="evidence" value="ECO:0007669"/>
    <property type="project" value="GOC"/>
</dbReference>
<dbReference type="GO" id="GO:0008915">
    <property type="term" value="F:lipid-A-disaccharide synthase activity"/>
    <property type="evidence" value="ECO:0007669"/>
    <property type="project" value="UniProtKB-UniRule"/>
</dbReference>
<dbReference type="GO" id="GO:0005543">
    <property type="term" value="F:phospholipid binding"/>
    <property type="evidence" value="ECO:0007669"/>
    <property type="project" value="TreeGrafter"/>
</dbReference>
<dbReference type="GO" id="GO:0009245">
    <property type="term" value="P:lipid A biosynthetic process"/>
    <property type="evidence" value="ECO:0007669"/>
    <property type="project" value="UniProtKB-UniRule"/>
</dbReference>
<dbReference type="CDD" id="cd01635">
    <property type="entry name" value="Glycosyltransferase_GTB-type"/>
    <property type="match status" value="1"/>
</dbReference>
<dbReference type="HAMAP" id="MF_00392">
    <property type="entry name" value="LpxB"/>
    <property type="match status" value="1"/>
</dbReference>
<dbReference type="InterPro" id="IPR003835">
    <property type="entry name" value="Glyco_trans_19"/>
</dbReference>
<dbReference type="NCBIfam" id="TIGR00215">
    <property type="entry name" value="lpxB"/>
    <property type="match status" value="1"/>
</dbReference>
<dbReference type="PANTHER" id="PTHR30372">
    <property type="entry name" value="LIPID-A-DISACCHARIDE SYNTHASE"/>
    <property type="match status" value="1"/>
</dbReference>
<dbReference type="PANTHER" id="PTHR30372:SF4">
    <property type="entry name" value="LIPID-A-DISACCHARIDE SYNTHASE, MITOCHONDRIAL-RELATED"/>
    <property type="match status" value="1"/>
</dbReference>
<dbReference type="Pfam" id="PF02684">
    <property type="entry name" value="LpxB"/>
    <property type="match status" value="1"/>
</dbReference>
<dbReference type="SUPFAM" id="SSF53756">
    <property type="entry name" value="UDP-Glycosyltransferase/glycogen phosphorylase"/>
    <property type="match status" value="1"/>
</dbReference>
<protein>
    <recommendedName>
        <fullName evidence="1">Lipid-A-disaccharide synthase</fullName>
        <ecNumber evidence="1">2.4.1.182</ecNumber>
    </recommendedName>
</protein>
<accession>Q2SBR1</accession>